<sequence length="265" mass="28567">MQIRQSVKLKKPLIHYITNPISINDCANIILAAGAKPIMAEHPLEVSEITSVSKSLGVNLGNITDNKMKSMLISGKTAYENKIPQVIDLVGVGCSKLRLDYAKKFILECHPNVIKGNMSEIKAIYGIKSSAKGIDVGACDIITEQNFDENIEMIKRLSMETGSVVAATGVVDIISNGTYTYIISNGCEMLSMITGTGCMLTGIIASYISSGNILEGTALAIVLMGICGELSQHVKGTGSFRNELIDNIFSISDDIIIKKIRINSY</sequence>
<dbReference type="EC" id="2.7.1.50" evidence="1"/>
<dbReference type="EMBL" id="CP000939">
    <property type="protein sequence ID" value="ACA45437.1"/>
    <property type="molecule type" value="Genomic_DNA"/>
</dbReference>
<dbReference type="RefSeq" id="WP_004451625.1">
    <property type="nucleotide sequence ID" value="NC_010516.1"/>
</dbReference>
<dbReference type="SMR" id="B1IHH3"/>
<dbReference type="KEGG" id="cbb:CLD_2322"/>
<dbReference type="HOGENOM" id="CLU_019943_0_0_9"/>
<dbReference type="UniPathway" id="UPA00060">
    <property type="reaction ID" value="UER00139"/>
</dbReference>
<dbReference type="Proteomes" id="UP000008541">
    <property type="component" value="Chromosome"/>
</dbReference>
<dbReference type="GO" id="GO:0005524">
    <property type="term" value="F:ATP binding"/>
    <property type="evidence" value="ECO:0007669"/>
    <property type="project" value="UniProtKB-UniRule"/>
</dbReference>
<dbReference type="GO" id="GO:0004417">
    <property type="term" value="F:hydroxyethylthiazole kinase activity"/>
    <property type="evidence" value="ECO:0007669"/>
    <property type="project" value="UniProtKB-UniRule"/>
</dbReference>
<dbReference type="GO" id="GO:0000287">
    <property type="term" value="F:magnesium ion binding"/>
    <property type="evidence" value="ECO:0007669"/>
    <property type="project" value="UniProtKB-UniRule"/>
</dbReference>
<dbReference type="GO" id="GO:0009228">
    <property type="term" value="P:thiamine biosynthetic process"/>
    <property type="evidence" value="ECO:0007669"/>
    <property type="project" value="UniProtKB-KW"/>
</dbReference>
<dbReference type="GO" id="GO:0009229">
    <property type="term" value="P:thiamine diphosphate biosynthetic process"/>
    <property type="evidence" value="ECO:0007669"/>
    <property type="project" value="UniProtKB-UniRule"/>
</dbReference>
<dbReference type="CDD" id="cd01170">
    <property type="entry name" value="THZ_kinase"/>
    <property type="match status" value="1"/>
</dbReference>
<dbReference type="Gene3D" id="3.40.1190.20">
    <property type="match status" value="1"/>
</dbReference>
<dbReference type="HAMAP" id="MF_00228">
    <property type="entry name" value="Thz_kinase"/>
    <property type="match status" value="1"/>
</dbReference>
<dbReference type="InterPro" id="IPR000417">
    <property type="entry name" value="Hyethyz_kinase"/>
</dbReference>
<dbReference type="InterPro" id="IPR029056">
    <property type="entry name" value="Ribokinase-like"/>
</dbReference>
<dbReference type="NCBIfam" id="NF006830">
    <property type="entry name" value="PRK09355.1"/>
    <property type="match status" value="1"/>
</dbReference>
<dbReference type="Pfam" id="PF02110">
    <property type="entry name" value="HK"/>
    <property type="match status" value="1"/>
</dbReference>
<dbReference type="PIRSF" id="PIRSF000513">
    <property type="entry name" value="Thz_kinase"/>
    <property type="match status" value="1"/>
</dbReference>
<dbReference type="PRINTS" id="PR01099">
    <property type="entry name" value="HYETHTZKNASE"/>
</dbReference>
<dbReference type="SUPFAM" id="SSF53613">
    <property type="entry name" value="Ribokinase-like"/>
    <property type="match status" value="1"/>
</dbReference>
<reference key="1">
    <citation type="journal article" date="2007" name="PLoS ONE">
        <title>Analysis of the neurotoxin complex genes in Clostridium botulinum A1-A4 and B1 strains: BoNT/A3, /Ba4 and /B1 clusters are located within plasmids.</title>
        <authorList>
            <person name="Smith T.J."/>
            <person name="Hill K.K."/>
            <person name="Foley B.T."/>
            <person name="Detter J.C."/>
            <person name="Munk A.C."/>
            <person name="Bruce D.C."/>
            <person name="Doggett N.A."/>
            <person name="Smith L.A."/>
            <person name="Marks J.D."/>
            <person name="Xie G."/>
            <person name="Brettin T.S."/>
        </authorList>
    </citation>
    <scope>NUCLEOTIDE SEQUENCE [LARGE SCALE GENOMIC DNA]</scope>
    <source>
        <strain>Okra / Type B1</strain>
    </source>
</reference>
<name>THIM2_CLOBK</name>
<evidence type="ECO:0000255" key="1">
    <source>
        <dbReference type="HAMAP-Rule" id="MF_00228"/>
    </source>
</evidence>
<accession>B1IHH3</accession>
<gene>
    <name evidence="1" type="primary">thiM2</name>
    <name type="ordered locus">CLD_2322</name>
</gene>
<organism>
    <name type="scientific">Clostridium botulinum (strain Okra / Type B1)</name>
    <dbReference type="NCBI Taxonomy" id="498213"/>
    <lineage>
        <taxon>Bacteria</taxon>
        <taxon>Bacillati</taxon>
        <taxon>Bacillota</taxon>
        <taxon>Clostridia</taxon>
        <taxon>Eubacteriales</taxon>
        <taxon>Clostridiaceae</taxon>
        <taxon>Clostridium</taxon>
    </lineage>
</organism>
<proteinExistence type="inferred from homology"/>
<keyword id="KW-0067">ATP-binding</keyword>
<keyword id="KW-0418">Kinase</keyword>
<keyword id="KW-0460">Magnesium</keyword>
<keyword id="KW-0479">Metal-binding</keyword>
<keyword id="KW-0547">Nucleotide-binding</keyword>
<keyword id="KW-0784">Thiamine biosynthesis</keyword>
<keyword id="KW-0808">Transferase</keyword>
<comment type="function">
    <text evidence="1">Catalyzes the phosphorylation of the hydroxyl group of 4-methyl-5-beta-hydroxyethylthiazole (THZ).</text>
</comment>
<comment type="catalytic activity">
    <reaction evidence="1">
        <text>5-(2-hydroxyethyl)-4-methylthiazole + ATP = 4-methyl-5-(2-phosphooxyethyl)-thiazole + ADP + H(+)</text>
        <dbReference type="Rhea" id="RHEA:24212"/>
        <dbReference type="ChEBI" id="CHEBI:15378"/>
        <dbReference type="ChEBI" id="CHEBI:17957"/>
        <dbReference type="ChEBI" id="CHEBI:30616"/>
        <dbReference type="ChEBI" id="CHEBI:58296"/>
        <dbReference type="ChEBI" id="CHEBI:456216"/>
        <dbReference type="EC" id="2.7.1.50"/>
    </reaction>
</comment>
<comment type="cofactor">
    <cofactor evidence="1">
        <name>Mg(2+)</name>
        <dbReference type="ChEBI" id="CHEBI:18420"/>
    </cofactor>
</comment>
<comment type="pathway">
    <text evidence="1">Cofactor biosynthesis; thiamine diphosphate biosynthesis; 4-methyl-5-(2-phosphoethyl)-thiazole from 5-(2-hydroxyethyl)-4-methylthiazole: step 1/1.</text>
</comment>
<comment type="similarity">
    <text evidence="1">Belongs to the Thz kinase family.</text>
</comment>
<protein>
    <recommendedName>
        <fullName evidence="1">Hydroxyethylthiazole kinase 2</fullName>
        <ecNumber evidence="1">2.7.1.50</ecNumber>
    </recommendedName>
    <alternativeName>
        <fullName evidence="1">4-methyl-5-beta-hydroxyethylthiazole kinase 2</fullName>
        <shortName evidence="1">TH kinase 2</shortName>
        <shortName evidence="1">Thz kinase 2</shortName>
    </alternativeName>
</protein>
<feature type="chain" id="PRO_0000383847" description="Hydroxyethylthiazole kinase 2">
    <location>
        <begin position="1"/>
        <end position="265"/>
    </location>
</feature>
<feature type="binding site" evidence="1">
    <location>
        <position position="39"/>
    </location>
    <ligand>
        <name>substrate</name>
    </ligand>
</feature>
<feature type="binding site" evidence="1">
    <location>
        <position position="115"/>
    </location>
    <ligand>
        <name>ATP</name>
        <dbReference type="ChEBI" id="CHEBI:30616"/>
    </ligand>
</feature>
<feature type="binding site" evidence="1">
    <location>
        <position position="168"/>
    </location>
    <ligand>
        <name>ATP</name>
        <dbReference type="ChEBI" id="CHEBI:30616"/>
    </ligand>
</feature>
<feature type="binding site" evidence="1">
    <location>
        <position position="195"/>
    </location>
    <ligand>
        <name>substrate</name>
    </ligand>
</feature>